<protein>
    <recommendedName>
        <fullName evidence="1">DNA repair protein RecO</fullName>
    </recommendedName>
    <alternativeName>
        <fullName evidence="1">Recombination protein O</fullName>
    </alternativeName>
</protein>
<evidence type="ECO:0000255" key="1">
    <source>
        <dbReference type="HAMAP-Rule" id="MF_00201"/>
    </source>
</evidence>
<reference key="1">
    <citation type="journal article" date="2011" name="J. Bacteriol.">
        <title>Complete genome sequence of the metabolically versatile plant growth-promoting endophyte, Variovorax paradoxus S110.</title>
        <authorList>
            <person name="Han J.I."/>
            <person name="Choi H.K."/>
            <person name="Lee S.W."/>
            <person name="Orwin P.M."/>
            <person name="Kim J."/>
            <person name="Laroe S.L."/>
            <person name="Kim T.G."/>
            <person name="O'Neil J."/>
            <person name="Leadbetter J.R."/>
            <person name="Lee S.Y."/>
            <person name="Hur C.G."/>
            <person name="Spain J.C."/>
            <person name="Ovchinnikova G."/>
            <person name="Goodwin L."/>
            <person name="Han C."/>
        </authorList>
    </citation>
    <scope>NUCLEOTIDE SEQUENCE [LARGE SCALE GENOMIC DNA]</scope>
    <source>
        <strain>S110</strain>
    </source>
</reference>
<gene>
    <name evidence="1" type="primary">recO</name>
    <name type="ordered locus">Vapar_1404</name>
</gene>
<sequence>MAAAHRVSHEPAYVLHRYDWSESSLILEVFTRHHGRIALVAKGAKRPSSNFRPVLLPLQPLQLNYGGDAEIRTLKGAEWMGGHVMPTGEALLSGYYVNELLLRLLARDDAHEALFDAYAGVVQVLAGDHAGAQAATQAAALRAFELLLLREVGLLPSLDVQTLTLEPLVADARYTLVPEAGLRLAAEGEAALSGADWQSLQGVLDDRAPFTATLREIATMNAGSNSALRNQLRALLNYHCGVSTLRTRQMMRDLQAL</sequence>
<dbReference type="EMBL" id="CP001635">
    <property type="protein sequence ID" value="ACS18055.1"/>
    <property type="molecule type" value="Genomic_DNA"/>
</dbReference>
<dbReference type="SMR" id="C5CSF7"/>
<dbReference type="STRING" id="543728.Vapar_1404"/>
<dbReference type="KEGG" id="vap:Vapar_1404"/>
<dbReference type="eggNOG" id="COG1381">
    <property type="taxonomic scope" value="Bacteria"/>
</dbReference>
<dbReference type="HOGENOM" id="CLU_066645_0_0_4"/>
<dbReference type="OrthoDB" id="9804792at2"/>
<dbReference type="GO" id="GO:0043590">
    <property type="term" value="C:bacterial nucleoid"/>
    <property type="evidence" value="ECO:0007669"/>
    <property type="project" value="TreeGrafter"/>
</dbReference>
<dbReference type="GO" id="GO:0006310">
    <property type="term" value="P:DNA recombination"/>
    <property type="evidence" value="ECO:0007669"/>
    <property type="project" value="UniProtKB-UniRule"/>
</dbReference>
<dbReference type="GO" id="GO:0006302">
    <property type="term" value="P:double-strand break repair"/>
    <property type="evidence" value="ECO:0007669"/>
    <property type="project" value="TreeGrafter"/>
</dbReference>
<dbReference type="Gene3D" id="2.40.50.140">
    <property type="entry name" value="Nucleic acid-binding proteins"/>
    <property type="match status" value="1"/>
</dbReference>
<dbReference type="Gene3D" id="1.20.1440.120">
    <property type="entry name" value="Recombination protein O, C-terminal domain"/>
    <property type="match status" value="1"/>
</dbReference>
<dbReference type="HAMAP" id="MF_00201">
    <property type="entry name" value="RecO"/>
    <property type="match status" value="1"/>
</dbReference>
<dbReference type="InterPro" id="IPR022572">
    <property type="entry name" value="DNA_rep/recomb_RecO_N"/>
</dbReference>
<dbReference type="InterPro" id="IPR012340">
    <property type="entry name" value="NA-bd_OB-fold"/>
</dbReference>
<dbReference type="InterPro" id="IPR003717">
    <property type="entry name" value="RecO"/>
</dbReference>
<dbReference type="InterPro" id="IPR042242">
    <property type="entry name" value="RecO_C"/>
</dbReference>
<dbReference type="NCBIfam" id="TIGR00613">
    <property type="entry name" value="reco"/>
    <property type="match status" value="1"/>
</dbReference>
<dbReference type="PANTHER" id="PTHR33991">
    <property type="entry name" value="DNA REPAIR PROTEIN RECO"/>
    <property type="match status" value="1"/>
</dbReference>
<dbReference type="PANTHER" id="PTHR33991:SF1">
    <property type="entry name" value="DNA REPAIR PROTEIN RECO"/>
    <property type="match status" value="1"/>
</dbReference>
<dbReference type="Pfam" id="PF02565">
    <property type="entry name" value="RecO_C"/>
    <property type="match status" value="1"/>
</dbReference>
<dbReference type="Pfam" id="PF11967">
    <property type="entry name" value="RecO_N"/>
    <property type="match status" value="1"/>
</dbReference>
<dbReference type="SUPFAM" id="SSF50249">
    <property type="entry name" value="Nucleic acid-binding proteins"/>
    <property type="match status" value="1"/>
</dbReference>
<accession>C5CSF7</accession>
<name>RECO_VARPS</name>
<organism>
    <name type="scientific">Variovorax paradoxus (strain S110)</name>
    <dbReference type="NCBI Taxonomy" id="543728"/>
    <lineage>
        <taxon>Bacteria</taxon>
        <taxon>Pseudomonadati</taxon>
        <taxon>Pseudomonadota</taxon>
        <taxon>Betaproteobacteria</taxon>
        <taxon>Burkholderiales</taxon>
        <taxon>Comamonadaceae</taxon>
        <taxon>Variovorax</taxon>
    </lineage>
</organism>
<comment type="function">
    <text evidence="1">Involved in DNA repair and RecF pathway recombination.</text>
</comment>
<comment type="similarity">
    <text evidence="1">Belongs to the RecO family.</text>
</comment>
<keyword id="KW-0227">DNA damage</keyword>
<keyword id="KW-0233">DNA recombination</keyword>
<keyword id="KW-0234">DNA repair</keyword>
<feature type="chain" id="PRO_1000204111" description="DNA repair protein RecO">
    <location>
        <begin position="1"/>
        <end position="257"/>
    </location>
</feature>
<proteinExistence type="inferred from homology"/>